<reference key="1">
    <citation type="submission" date="2006-11" db="EMBL/GenBank/DDBJ databases">
        <title>Identification and characterization of a new conjugation/ type IVA secretion system (trb/tra) of L. pneumophila Corby localized on a mobile genomic island.</title>
        <authorList>
            <person name="Gloeckner G."/>
            <person name="Albert-Weissenberger C."/>
            <person name="Weinmann E."/>
            <person name="Jacobi S."/>
            <person name="Schunder E."/>
            <person name="Steinert M."/>
            <person name="Buchrieser C."/>
            <person name="Hacker J."/>
            <person name="Heuner K."/>
        </authorList>
    </citation>
    <scope>NUCLEOTIDE SEQUENCE [LARGE SCALE GENOMIC DNA]</scope>
    <source>
        <strain>Corby</strain>
    </source>
</reference>
<protein>
    <recommendedName>
        <fullName evidence="1">UPF0434 protein LPC_1374</fullName>
    </recommendedName>
</protein>
<dbReference type="EMBL" id="CP000675">
    <property type="protein sequence ID" value="ABQ55328.1"/>
    <property type="molecule type" value="Genomic_DNA"/>
</dbReference>
<dbReference type="RefSeq" id="WP_010947637.1">
    <property type="nucleotide sequence ID" value="NZ_JAPMSS010000005.1"/>
</dbReference>
<dbReference type="SMR" id="A5ID78"/>
<dbReference type="KEGG" id="lpc:LPC_1374"/>
<dbReference type="HOGENOM" id="CLU_155659_3_1_6"/>
<dbReference type="GO" id="GO:0005829">
    <property type="term" value="C:cytosol"/>
    <property type="evidence" value="ECO:0007669"/>
    <property type="project" value="TreeGrafter"/>
</dbReference>
<dbReference type="FunFam" id="2.20.25.10:FF:000002">
    <property type="entry name" value="UPF0434 protein YcaR"/>
    <property type="match status" value="1"/>
</dbReference>
<dbReference type="Gene3D" id="2.20.25.10">
    <property type="match status" value="1"/>
</dbReference>
<dbReference type="HAMAP" id="MF_01187">
    <property type="entry name" value="UPF0434"/>
    <property type="match status" value="1"/>
</dbReference>
<dbReference type="InterPro" id="IPR005651">
    <property type="entry name" value="Trm112-like"/>
</dbReference>
<dbReference type="PANTHER" id="PTHR33505:SF4">
    <property type="entry name" value="PROTEIN PREY, MITOCHONDRIAL"/>
    <property type="match status" value="1"/>
</dbReference>
<dbReference type="PANTHER" id="PTHR33505">
    <property type="entry name" value="ZGC:162634"/>
    <property type="match status" value="1"/>
</dbReference>
<dbReference type="Pfam" id="PF03966">
    <property type="entry name" value="Trm112p"/>
    <property type="match status" value="1"/>
</dbReference>
<dbReference type="SUPFAM" id="SSF158997">
    <property type="entry name" value="Trm112p-like"/>
    <property type="match status" value="1"/>
</dbReference>
<organism>
    <name type="scientific">Legionella pneumophila (strain Corby)</name>
    <dbReference type="NCBI Taxonomy" id="400673"/>
    <lineage>
        <taxon>Bacteria</taxon>
        <taxon>Pseudomonadati</taxon>
        <taxon>Pseudomonadota</taxon>
        <taxon>Gammaproteobacteria</taxon>
        <taxon>Legionellales</taxon>
        <taxon>Legionellaceae</taxon>
        <taxon>Legionella</taxon>
    </lineage>
</organism>
<sequence>MDKKLLEILVCPLCKGKLLFKKQELICKFDRLAFPVRDDIPVMLEQEARLIPLEEKDKL</sequence>
<proteinExistence type="inferred from homology"/>
<comment type="similarity">
    <text evidence="1">Belongs to the UPF0434 family.</text>
</comment>
<name>Y1374_LEGPC</name>
<evidence type="ECO:0000255" key="1">
    <source>
        <dbReference type="HAMAP-Rule" id="MF_01187"/>
    </source>
</evidence>
<gene>
    <name type="ordered locus">LPC_1374</name>
</gene>
<accession>A5ID78</accession>
<feature type="chain" id="PRO_1000065846" description="UPF0434 protein LPC_1374">
    <location>
        <begin position="1"/>
        <end position="59"/>
    </location>
</feature>